<accession>B2U7E6</accession>
<organism>
    <name type="scientific">Ralstonia pickettii (strain 12J)</name>
    <dbReference type="NCBI Taxonomy" id="402626"/>
    <lineage>
        <taxon>Bacteria</taxon>
        <taxon>Pseudomonadati</taxon>
        <taxon>Pseudomonadota</taxon>
        <taxon>Betaproteobacteria</taxon>
        <taxon>Burkholderiales</taxon>
        <taxon>Burkholderiaceae</taxon>
        <taxon>Ralstonia</taxon>
    </lineage>
</organism>
<feature type="chain" id="PRO_1000186721" description="3-octaprenyl-4-hydroxybenzoate carboxy-lyase">
    <location>
        <begin position="1"/>
        <end position="503"/>
    </location>
</feature>
<feature type="active site" description="Proton donor" evidence="1">
    <location>
        <position position="303"/>
    </location>
</feature>
<feature type="binding site" evidence="1">
    <location>
        <position position="176"/>
    </location>
    <ligand>
        <name>Mn(2+)</name>
        <dbReference type="ChEBI" id="CHEBI:29035"/>
    </ligand>
</feature>
<feature type="binding site" evidence="1">
    <location>
        <begin position="179"/>
        <end position="181"/>
    </location>
    <ligand>
        <name>prenylated FMN</name>
        <dbReference type="ChEBI" id="CHEBI:87746"/>
    </ligand>
</feature>
<feature type="binding site" evidence="1">
    <location>
        <begin position="193"/>
        <end position="195"/>
    </location>
    <ligand>
        <name>prenylated FMN</name>
        <dbReference type="ChEBI" id="CHEBI:87746"/>
    </ligand>
</feature>
<feature type="binding site" evidence="1">
    <location>
        <begin position="198"/>
        <end position="199"/>
    </location>
    <ligand>
        <name>prenylated FMN</name>
        <dbReference type="ChEBI" id="CHEBI:87746"/>
    </ligand>
</feature>
<feature type="binding site" evidence="1">
    <location>
        <position position="242"/>
    </location>
    <ligand>
        <name>Mn(2+)</name>
        <dbReference type="ChEBI" id="CHEBI:29035"/>
    </ligand>
</feature>
<gene>
    <name evidence="1" type="primary">ubiD</name>
    <name type="ordered locus">Rpic_0657</name>
</gene>
<protein>
    <recommendedName>
        <fullName evidence="1">3-octaprenyl-4-hydroxybenzoate carboxy-lyase</fullName>
        <ecNumber evidence="1">4.1.1.98</ecNumber>
    </recommendedName>
    <alternativeName>
        <fullName evidence="1">Polyprenyl p-hydroxybenzoate decarboxylase</fullName>
    </alternativeName>
</protein>
<dbReference type="EC" id="4.1.1.98" evidence="1"/>
<dbReference type="EMBL" id="CP001068">
    <property type="protein sequence ID" value="ACD25808.1"/>
    <property type="molecule type" value="Genomic_DNA"/>
</dbReference>
<dbReference type="SMR" id="B2U7E6"/>
<dbReference type="STRING" id="402626.Rpic_0657"/>
<dbReference type="KEGG" id="rpi:Rpic_0657"/>
<dbReference type="PATRIC" id="fig|402626.5.peg.1858"/>
<dbReference type="eggNOG" id="COG0043">
    <property type="taxonomic scope" value="Bacteria"/>
</dbReference>
<dbReference type="HOGENOM" id="CLU_023348_4_1_4"/>
<dbReference type="UniPathway" id="UPA00232"/>
<dbReference type="GO" id="GO:0005829">
    <property type="term" value="C:cytosol"/>
    <property type="evidence" value="ECO:0007669"/>
    <property type="project" value="TreeGrafter"/>
</dbReference>
<dbReference type="GO" id="GO:0005886">
    <property type="term" value="C:plasma membrane"/>
    <property type="evidence" value="ECO:0007669"/>
    <property type="project" value="UniProtKB-SubCell"/>
</dbReference>
<dbReference type="GO" id="GO:0008694">
    <property type="term" value="F:3-octaprenyl-4-hydroxybenzoate carboxy-lyase activity"/>
    <property type="evidence" value="ECO:0007669"/>
    <property type="project" value="UniProtKB-UniRule"/>
</dbReference>
<dbReference type="GO" id="GO:0046872">
    <property type="term" value="F:metal ion binding"/>
    <property type="evidence" value="ECO:0007669"/>
    <property type="project" value="UniProtKB-KW"/>
</dbReference>
<dbReference type="GO" id="GO:0006744">
    <property type="term" value="P:ubiquinone biosynthetic process"/>
    <property type="evidence" value="ECO:0007669"/>
    <property type="project" value="UniProtKB-UniRule"/>
</dbReference>
<dbReference type="FunFam" id="1.20.5.570:FF:000001">
    <property type="entry name" value="3-octaprenyl-4-hydroxybenzoate carboxy-lyase"/>
    <property type="match status" value="1"/>
</dbReference>
<dbReference type="FunFam" id="3.40.1670.10:FF:000001">
    <property type="entry name" value="3-octaprenyl-4-hydroxybenzoate carboxy-lyase"/>
    <property type="match status" value="1"/>
</dbReference>
<dbReference type="Gene3D" id="1.20.5.570">
    <property type="entry name" value="Single helix bin"/>
    <property type="match status" value="1"/>
</dbReference>
<dbReference type="Gene3D" id="3.40.1670.10">
    <property type="entry name" value="UbiD C-terminal domain-like"/>
    <property type="match status" value="1"/>
</dbReference>
<dbReference type="HAMAP" id="MF_01636">
    <property type="entry name" value="UbiD"/>
    <property type="match status" value="1"/>
</dbReference>
<dbReference type="InterPro" id="IPR002830">
    <property type="entry name" value="UbiD"/>
</dbReference>
<dbReference type="InterPro" id="IPR049381">
    <property type="entry name" value="UbiD-like_C"/>
</dbReference>
<dbReference type="InterPro" id="IPR049383">
    <property type="entry name" value="UbiD-like_N"/>
</dbReference>
<dbReference type="InterPro" id="IPR023677">
    <property type="entry name" value="UbiD_bacteria"/>
</dbReference>
<dbReference type="InterPro" id="IPR048304">
    <property type="entry name" value="UbiD_Rift_dom"/>
</dbReference>
<dbReference type="NCBIfam" id="NF008175">
    <property type="entry name" value="PRK10922.1"/>
    <property type="match status" value="1"/>
</dbReference>
<dbReference type="NCBIfam" id="TIGR00148">
    <property type="entry name" value="UbiD family decarboxylase"/>
    <property type="match status" value="1"/>
</dbReference>
<dbReference type="PANTHER" id="PTHR30108">
    <property type="entry name" value="3-OCTAPRENYL-4-HYDROXYBENZOATE CARBOXY-LYASE-RELATED"/>
    <property type="match status" value="1"/>
</dbReference>
<dbReference type="PANTHER" id="PTHR30108:SF17">
    <property type="entry name" value="FERULIC ACID DECARBOXYLASE 1"/>
    <property type="match status" value="1"/>
</dbReference>
<dbReference type="Pfam" id="PF01977">
    <property type="entry name" value="UbiD"/>
    <property type="match status" value="1"/>
</dbReference>
<dbReference type="Pfam" id="PF20696">
    <property type="entry name" value="UbiD_C"/>
    <property type="match status" value="1"/>
</dbReference>
<dbReference type="Pfam" id="PF20695">
    <property type="entry name" value="UbiD_N"/>
    <property type="match status" value="1"/>
</dbReference>
<dbReference type="SUPFAM" id="SSF50475">
    <property type="entry name" value="FMN-binding split barrel"/>
    <property type="match status" value="1"/>
</dbReference>
<dbReference type="SUPFAM" id="SSF143968">
    <property type="entry name" value="UbiD C-terminal domain-like"/>
    <property type="match status" value="1"/>
</dbReference>
<keyword id="KW-1003">Cell membrane</keyword>
<keyword id="KW-0210">Decarboxylase</keyword>
<keyword id="KW-0285">Flavoprotein</keyword>
<keyword id="KW-0288">FMN</keyword>
<keyword id="KW-0456">Lyase</keyword>
<keyword id="KW-0464">Manganese</keyword>
<keyword id="KW-0472">Membrane</keyword>
<keyword id="KW-0479">Metal-binding</keyword>
<keyword id="KW-0831">Ubiquinone biosynthesis</keyword>
<reference key="1">
    <citation type="submission" date="2008-05" db="EMBL/GenBank/DDBJ databases">
        <title>Complete sequence of chromosome 1 of Ralstonia pickettii 12J.</title>
        <authorList>
            <person name="Lucas S."/>
            <person name="Copeland A."/>
            <person name="Lapidus A."/>
            <person name="Glavina del Rio T."/>
            <person name="Dalin E."/>
            <person name="Tice H."/>
            <person name="Bruce D."/>
            <person name="Goodwin L."/>
            <person name="Pitluck S."/>
            <person name="Meincke L."/>
            <person name="Brettin T."/>
            <person name="Detter J.C."/>
            <person name="Han C."/>
            <person name="Kuske C.R."/>
            <person name="Schmutz J."/>
            <person name="Larimer F."/>
            <person name="Land M."/>
            <person name="Hauser L."/>
            <person name="Kyrpides N."/>
            <person name="Mikhailova N."/>
            <person name="Marsh T."/>
            <person name="Richardson P."/>
        </authorList>
    </citation>
    <scope>NUCLEOTIDE SEQUENCE [LARGE SCALE GENOMIC DNA]</scope>
    <source>
        <strain>12J</strain>
    </source>
</reference>
<evidence type="ECO:0000255" key="1">
    <source>
        <dbReference type="HAMAP-Rule" id="MF_01636"/>
    </source>
</evidence>
<proteinExistence type="inferred from homology"/>
<comment type="function">
    <text evidence="1">Catalyzes the decarboxylation of 3-octaprenyl-4-hydroxy benzoate to 2-octaprenylphenol, an intermediate step in ubiquinone biosynthesis.</text>
</comment>
<comment type="catalytic activity">
    <reaction evidence="1">
        <text>a 4-hydroxy-3-(all-trans-polyprenyl)benzoate + H(+) = a 2-(all-trans-polyprenyl)phenol + CO2</text>
        <dbReference type="Rhea" id="RHEA:41680"/>
        <dbReference type="Rhea" id="RHEA-COMP:9514"/>
        <dbReference type="Rhea" id="RHEA-COMP:9516"/>
        <dbReference type="ChEBI" id="CHEBI:1269"/>
        <dbReference type="ChEBI" id="CHEBI:15378"/>
        <dbReference type="ChEBI" id="CHEBI:16526"/>
        <dbReference type="ChEBI" id="CHEBI:78396"/>
        <dbReference type="EC" id="4.1.1.98"/>
    </reaction>
</comment>
<comment type="cofactor">
    <cofactor evidence="1">
        <name>prenylated FMN</name>
        <dbReference type="ChEBI" id="CHEBI:87746"/>
    </cofactor>
    <text evidence="1">Binds 1 prenylated FMN per subunit.</text>
</comment>
<comment type="cofactor">
    <cofactor evidence="1">
        <name>Mn(2+)</name>
        <dbReference type="ChEBI" id="CHEBI:29035"/>
    </cofactor>
</comment>
<comment type="pathway">
    <text evidence="1">Cofactor biosynthesis; ubiquinone biosynthesis.</text>
</comment>
<comment type="subunit">
    <text evidence="1">Homohexamer.</text>
</comment>
<comment type="subcellular location">
    <subcellularLocation>
        <location evidence="1">Cell membrane</location>
        <topology evidence="1">Peripheral membrane protein</topology>
    </subcellularLocation>
</comment>
<comment type="similarity">
    <text evidence="1">Belongs to the UbiD family.</text>
</comment>
<name>UBID_RALPJ</name>
<sequence>MQYRDLRDFLAQLERTGELRRVHQPVSPRLEMTEVCDRLLRSEGPAVVFAQPVDGAQKYDMPVLANLFGTTRRVALGMGAESLDELRDIGRLLSALKEPEPPRGLREAGKLWTMAKAVWDMAPRKVSSPACQEIVWEGNDVDLSRIPVQTCWPGDAAPLVTWGLVITRGPHKKRQNLGIYRQQVINRNQVIMRWLAHRGGALDFREHAIANPGQPFPIAVALGADPATILGAVTPVPDTLSEYQFAGLLRGSRTELATCLTPSLAQAQLQVPAGAEIILEGHIQPDPTHPSGYQHALEGPFGDHTGYYNEQDWFPVFTVERITMRRDPIYHSTYTGKPPDEPAVLGVALNEVFVPLLQKQFPEIADFYLPPEGCSYRMALVSMKKQYAGHAKRVMFGVWSFLRQFMYTKFIVVVDDDVNLRDWKEVIWAITTRVDPARDTVMVENTPIDYLDFASPVSGLGSKMGIDATNKWPGETTREWGQPIVMDTAVKAKVDAMWDTLFQ</sequence>